<evidence type="ECO:0000255" key="1">
    <source>
        <dbReference type="HAMAP-Rule" id="MF_01396"/>
    </source>
</evidence>
<name>ATPL_GEOKA</name>
<organism>
    <name type="scientific">Geobacillus kaustophilus (strain HTA426)</name>
    <dbReference type="NCBI Taxonomy" id="235909"/>
    <lineage>
        <taxon>Bacteria</taxon>
        <taxon>Bacillati</taxon>
        <taxon>Bacillota</taxon>
        <taxon>Bacilli</taxon>
        <taxon>Bacillales</taxon>
        <taxon>Anoxybacillaceae</taxon>
        <taxon>Geobacillus</taxon>
        <taxon>Geobacillus thermoleovorans group</taxon>
    </lineage>
</organism>
<feature type="chain" id="PRO_1000184382" description="ATP synthase subunit c">
    <location>
        <begin position="1"/>
        <end position="72"/>
    </location>
</feature>
<feature type="transmembrane region" description="Helical" evidence="1">
    <location>
        <begin position="1"/>
        <end position="21"/>
    </location>
</feature>
<feature type="transmembrane region" description="Helical" evidence="1">
    <location>
        <begin position="48"/>
        <end position="68"/>
    </location>
</feature>
<feature type="site" description="Reversibly protonated during proton transport" evidence="1">
    <location>
        <position position="56"/>
    </location>
</feature>
<comment type="function">
    <text evidence="1">F(1)F(0) ATP synthase produces ATP from ADP in the presence of a proton or sodium gradient. F-type ATPases consist of two structural domains, F(1) containing the extramembraneous catalytic core and F(0) containing the membrane proton channel, linked together by a central stalk and a peripheral stalk. During catalysis, ATP synthesis in the catalytic domain of F(1) is coupled via a rotary mechanism of the central stalk subunits to proton translocation.</text>
</comment>
<comment type="function">
    <text evidence="1">Key component of the F(0) channel; it plays a direct role in translocation across the membrane. A homomeric c-ring of between 10-14 subunits forms the central stalk rotor element with the F(1) delta and epsilon subunits.</text>
</comment>
<comment type="subunit">
    <text evidence="1">F-type ATPases have 2 components, F(1) - the catalytic core - and F(0) - the membrane proton channel. F(1) has five subunits: alpha(3), beta(3), gamma(1), delta(1), epsilon(1). F(0) has three main subunits: a(1), b(2) and c(10-14). The alpha and beta chains form an alternating ring which encloses part of the gamma chain. F(1) is attached to F(0) by a central stalk formed by the gamma and epsilon chains, while a peripheral stalk is formed by the delta and b chains.</text>
</comment>
<comment type="subcellular location">
    <subcellularLocation>
        <location evidence="1">Cell membrane</location>
        <topology evidence="1">Multi-pass membrane protein</topology>
    </subcellularLocation>
</comment>
<comment type="similarity">
    <text evidence="1">Belongs to the ATPase C chain family.</text>
</comment>
<keyword id="KW-0066">ATP synthesis</keyword>
<keyword id="KW-1003">Cell membrane</keyword>
<keyword id="KW-0138">CF(0)</keyword>
<keyword id="KW-0375">Hydrogen ion transport</keyword>
<keyword id="KW-0406">Ion transport</keyword>
<keyword id="KW-0446">Lipid-binding</keyword>
<keyword id="KW-0472">Membrane</keyword>
<keyword id="KW-1185">Reference proteome</keyword>
<keyword id="KW-0812">Transmembrane</keyword>
<keyword id="KW-1133">Transmembrane helix</keyword>
<keyword id="KW-0813">Transport</keyword>
<accession>Q5KUI8</accession>
<proteinExistence type="inferred from homology"/>
<protein>
    <recommendedName>
        <fullName evidence="1">ATP synthase subunit c</fullName>
    </recommendedName>
    <alternativeName>
        <fullName evidence="1">ATP synthase F(0) sector subunit c</fullName>
    </alternativeName>
    <alternativeName>
        <fullName evidence="1">F-type ATPase subunit c</fullName>
        <shortName evidence="1">F-ATPase subunit c</shortName>
    </alternativeName>
    <alternativeName>
        <fullName evidence="1">Lipid-binding protein</fullName>
    </alternativeName>
</protein>
<sequence>MSLGVLAAAIAVGLGALGAGIGNGLIVSRTIEGIARQPELRPVLQTTMFIGVALVEALPIIGVVFSFIYLGR</sequence>
<dbReference type="EMBL" id="BA000043">
    <property type="protein sequence ID" value="BAD77648.1"/>
    <property type="molecule type" value="Genomic_DNA"/>
</dbReference>
<dbReference type="RefSeq" id="WP_011232830.1">
    <property type="nucleotide sequence ID" value="NC_006510.1"/>
</dbReference>
<dbReference type="BMRB" id="Q5KUI8"/>
<dbReference type="SMR" id="Q5KUI8"/>
<dbReference type="STRING" id="235909.GK3363"/>
<dbReference type="GeneID" id="89612561"/>
<dbReference type="KEGG" id="gka:GK3363"/>
<dbReference type="eggNOG" id="COG0636">
    <property type="taxonomic scope" value="Bacteria"/>
</dbReference>
<dbReference type="HOGENOM" id="CLU_148047_1_1_9"/>
<dbReference type="Proteomes" id="UP000001172">
    <property type="component" value="Chromosome"/>
</dbReference>
<dbReference type="GO" id="GO:0005886">
    <property type="term" value="C:plasma membrane"/>
    <property type="evidence" value="ECO:0007669"/>
    <property type="project" value="UniProtKB-SubCell"/>
</dbReference>
<dbReference type="GO" id="GO:0045259">
    <property type="term" value="C:proton-transporting ATP synthase complex"/>
    <property type="evidence" value="ECO:0007669"/>
    <property type="project" value="UniProtKB-KW"/>
</dbReference>
<dbReference type="GO" id="GO:0033177">
    <property type="term" value="C:proton-transporting two-sector ATPase complex, proton-transporting domain"/>
    <property type="evidence" value="ECO:0007669"/>
    <property type="project" value="InterPro"/>
</dbReference>
<dbReference type="GO" id="GO:0008289">
    <property type="term" value="F:lipid binding"/>
    <property type="evidence" value="ECO:0007669"/>
    <property type="project" value="UniProtKB-KW"/>
</dbReference>
<dbReference type="GO" id="GO:0046933">
    <property type="term" value="F:proton-transporting ATP synthase activity, rotational mechanism"/>
    <property type="evidence" value="ECO:0007669"/>
    <property type="project" value="UniProtKB-UniRule"/>
</dbReference>
<dbReference type="CDD" id="cd18185">
    <property type="entry name" value="ATP-synt_Fo_c_ATPE"/>
    <property type="match status" value="1"/>
</dbReference>
<dbReference type="FunFam" id="1.20.20.10:FF:000004">
    <property type="entry name" value="ATP synthase subunit c"/>
    <property type="match status" value="1"/>
</dbReference>
<dbReference type="Gene3D" id="1.20.20.10">
    <property type="entry name" value="F1F0 ATP synthase subunit C"/>
    <property type="match status" value="1"/>
</dbReference>
<dbReference type="HAMAP" id="MF_01396">
    <property type="entry name" value="ATP_synth_c_bact"/>
    <property type="match status" value="1"/>
</dbReference>
<dbReference type="InterPro" id="IPR005953">
    <property type="entry name" value="ATP_synth_csu_bac/chlpt"/>
</dbReference>
<dbReference type="InterPro" id="IPR000454">
    <property type="entry name" value="ATP_synth_F0_csu"/>
</dbReference>
<dbReference type="InterPro" id="IPR020537">
    <property type="entry name" value="ATP_synth_F0_csu_DDCD_BS"/>
</dbReference>
<dbReference type="InterPro" id="IPR038662">
    <property type="entry name" value="ATP_synth_F0_csu_sf"/>
</dbReference>
<dbReference type="InterPro" id="IPR002379">
    <property type="entry name" value="ATPase_proteolipid_c-like_dom"/>
</dbReference>
<dbReference type="InterPro" id="IPR035921">
    <property type="entry name" value="F/V-ATP_Csub_sf"/>
</dbReference>
<dbReference type="NCBIfam" id="TIGR01260">
    <property type="entry name" value="ATP_synt_c"/>
    <property type="match status" value="1"/>
</dbReference>
<dbReference type="NCBIfam" id="NF005363">
    <property type="entry name" value="PRK06876.1"/>
    <property type="match status" value="1"/>
</dbReference>
<dbReference type="Pfam" id="PF00137">
    <property type="entry name" value="ATP-synt_C"/>
    <property type="match status" value="1"/>
</dbReference>
<dbReference type="PRINTS" id="PR00124">
    <property type="entry name" value="ATPASEC"/>
</dbReference>
<dbReference type="SUPFAM" id="SSF81333">
    <property type="entry name" value="F1F0 ATP synthase subunit C"/>
    <property type="match status" value="1"/>
</dbReference>
<dbReference type="PROSITE" id="PS00605">
    <property type="entry name" value="ATPASE_C"/>
    <property type="match status" value="1"/>
</dbReference>
<gene>
    <name evidence="1" type="primary">atpE</name>
    <name type="ordered locus">GK3363</name>
</gene>
<reference key="1">
    <citation type="journal article" date="2004" name="Nucleic Acids Res.">
        <title>Thermoadaptation trait revealed by the genome sequence of thermophilic Geobacillus kaustophilus.</title>
        <authorList>
            <person name="Takami H."/>
            <person name="Takaki Y."/>
            <person name="Chee G.-J."/>
            <person name="Nishi S."/>
            <person name="Shimamura S."/>
            <person name="Suzuki H."/>
            <person name="Matsui S."/>
            <person name="Uchiyama I."/>
        </authorList>
    </citation>
    <scope>NUCLEOTIDE SEQUENCE [LARGE SCALE GENOMIC DNA]</scope>
    <source>
        <strain>HTA426</strain>
    </source>
</reference>